<dbReference type="EC" id="3.1.13.4" evidence="2 3 7"/>
<dbReference type="EMBL" id="AK058188">
    <property type="protein sequence ID" value="BAB71707.1"/>
    <property type="molecule type" value="mRNA"/>
</dbReference>
<dbReference type="EMBL" id="AC104701">
    <property type="status" value="NOT_ANNOTATED_CDS"/>
    <property type="molecule type" value="Genomic_DNA"/>
</dbReference>
<dbReference type="EMBL" id="AL133112">
    <property type="protein sequence ID" value="CAB61415.1"/>
    <property type="molecule type" value="mRNA"/>
</dbReference>
<dbReference type="PIR" id="T42705">
    <property type="entry name" value="T42705"/>
</dbReference>
<dbReference type="RefSeq" id="NP_001273719.1">
    <molecule id="Q96LI5-1"/>
    <property type="nucleotide sequence ID" value="NM_001286790.2"/>
</dbReference>
<dbReference type="RefSeq" id="NP_653172.2">
    <molecule id="Q96LI5-1"/>
    <property type="nucleotide sequence ID" value="NM_144571.3"/>
</dbReference>
<dbReference type="PDB" id="3NGN">
    <property type="method" value="X-ray"/>
    <property type="resolution" value="2.40 A"/>
    <property type="chains" value="A=158-555"/>
</dbReference>
<dbReference type="PDB" id="3NGO">
    <property type="method" value="X-ray"/>
    <property type="resolution" value="2.20 A"/>
    <property type="chains" value="A=158-555"/>
</dbReference>
<dbReference type="PDB" id="3NGQ">
    <property type="method" value="X-ray"/>
    <property type="resolution" value="1.80 A"/>
    <property type="chains" value="A=158-555"/>
</dbReference>
<dbReference type="PDB" id="5DV2">
    <property type="method" value="X-ray"/>
    <property type="resolution" value="2.07 A"/>
    <property type="chains" value="A=158-555"/>
</dbReference>
<dbReference type="PDB" id="5DV4">
    <property type="method" value="X-ray"/>
    <property type="resolution" value="1.80 A"/>
    <property type="chains" value="A=158-555"/>
</dbReference>
<dbReference type="PDB" id="7VOI">
    <property type="method" value="X-ray"/>
    <property type="resolution" value="4.38 A"/>
    <property type="chains" value="C=1-555"/>
</dbReference>
<dbReference type="PDBsum" id="3NGN"/>
<dbReference type="PDBsum" id="3NGO"/>
<dbReference type="PDBsum" id="3NGQ"/>
<dbReference type="PDBsum" id="5DV2"/>
<dbReference type="PDBsum" id="5DV4"/>
<dbReference type="PDBsum" id="7VOI"/>
<dbReference type="SMR" id="Q96LI5"/>
<dbReference type="BioGRID" id="128873">
    <property type="interactions" value="97"/>
</dbReference>
<dbReference type="ComplexPortal" id="CPX-2522">
    <property type="entry name" value="CCR4-NOT mRNA deadenylase complex, CNOT6L-CNOT7 variant"/>
</dbReference>
<dbReference type="ComplexPortal" id="CPX-2535">
    <property type="entry name" value="CCR4-NOT mRNA deadenylase complex, CNOT6L-CNOT8 variant"/>
</dbReference>
<dbReference type="CORUM" id="Q96LI5"/>
<dbReference type="DIP" id="DIP-46837N"/>
<dbReference type="FunCoup" id="Q96LI5">
    <property type="interactions" value="3588"/>
</dbReference>
<dbReference type="IntAct" id="Q96LI5">
    <property type="interactions" value="57"/>
</dbReference>
<dbReference type="STRING" id="9606.ENSP00000424896"/>
<dbReference type="ChEMBL" id="CHEMBL4105957"/>
<dbReference type="GlyCosmos" id="Q96LI5">
    <property type="glycosylation" value="1 site, 2 glycans"/>
</dbReference>
<dbReference type="GlyGen" id="Q96LI5">
    <property type="glycosylation" value="1 site, 2 O-linked glycans (1 site)"/>
</dbReference>
<dbReference type="iPTMnet" id="Q96LI5"/>
<dbReference type="PhosphoSitePlus" id="Q96LI5"/>
<dbReference type="BioMuta" id="CNOT6L"/>
<dbReference type="DMDM" id="166216089"/>
<dbReference type="jPOST" id="Q96LI5"/>
<dbReference type="MassIVE" id="Q96LI5"/>
<dbReference type="PaxDb" id="9606-ENSP00000424896"/>
<dbReference type="PeptideAtlas" id="Q96LI5"/>
<dbReference type="ProteomicsDB" id="77208">
    <molecule id="Q96LI5-1"/>
</dbReference>
<dbReference type="ProteomicsDB" id="77209">
    <molecule id="Q96LI5-2"/>
</dbReference>
<dbReference type="Pumba" id="Q96LI5"/>
<dbReference type="Antibodypedia" id="50898">
    <property type="antibodies" value="60 antibodies from 14 providers"/>
</dbReference>
<dbReference type="DNASU" id="246175"/>
<dbReference type="Ensembl" id="ENST00000504123.7">
    <molecule id="Q96LI5-1"/>
    <property type="protein sequence ID" value="ENSP00000424896.1"/>
    <property type="gene ID" value="ENSG00000138767.14"/>
</dbReference>
<dbReference type="GeneID" id="246175"/>
<dbReference type="KEGG" id="hsa:246175"/>
<dbReference type="MANE-Select" id="ENST00000504123.7">
    <property type="protein sequence ID" value="ENSP00000424896.1"/>
    <property type="RefSeq nucleotide sequence ID" value="NM_144571.3"/>
    <property type="RefSeq protein sequence ID" value="NP_653172.2"/>
</dbReference>
<dbReference type="UCSC" id="uc011ccd.4">
    <molecule id="Q96LI5-1"/>
    <property type="organism name" value="human"/>
</dbReference>
<dbReference type="AGR" id="HGNC:18042"/>
<dbReference type="CTD" id="246175"/>
<dbReference type="DisGeNET" id="246175"/>
<dbReference type="GeneCards" id="CNOT6L"/>
<dbReference type="HGNC" id="HGNC:18042">
    <property type="gene designation" value="CNOT6L"/>
</dbReference>
<dbReference type="HPA" id="ENSG00000138767">
    <property type="expression patterns" value="Low tissue specificity"/>
</dbReference>
<dbReference type="MIM" id="618069">
    <property type="type" value="gene"/>
</dbReference>
<dbReference type="neXtProt" id="NX_Q96LI5"/>
<dbReference type="OpenTargets" id="ENSG00000138767"/>
<dbReference type="PharmGKB" id="PA38480"/>
<dbReference type="VEuPathDB" id="HostDB:ENSG00000138767"/>
<dbReference type="eggNOG" id="KOG0620">
    <property type="taxonomic scope" value="Eukaryota"/>
</dbReference>
<dbReference type="GeneTree" id="ENSGT00940000157298"/>
<dbReference type="InParanoid" id="Q96LI5"/>
<dbReference type="OrthoDB" id="428734at2759"/>
<dbReference type="PAN-GO" id="Q96LI5">
    <property type="GO annotations" value="5 GO annotations based on evolutionary models"/>
</dbReference>
<dbReference type="PhylomeDB" id="Q96LI5"/>
<dbReference type="TreeFam" id="TF323175"/>
<dbReference type="BRENDA" id="3.1.13.4">
    <property type="organism ID" value="2681"/>
</dbReference>
<dbReference type="PathwayCommons" id="Q96LI5"/>
<dbReference type="Reactome" id="R-HSA-429947">
    <property type="pathway name" value="Deadenylation of mRNA"/>
</dbReference>
<dbReference type="Reactome" id="R-HSA-6804115">
    <property type="pathway name" value="TP53 regulates transcription of additional cell cycle genes whose exact role in the p53 pathway remain uncertain"/>
</dbReference>
<dbReference type="Reactome" id="R-HSA-9820841">
    <property type="pathway name" value="M-decay: degradation of maternal mRNAs by maternally stored factors"/>
</dbReference>
<dbReference type="SignaLink" id="Q96LI5"/>
<dbReference type="SIGNOR" id="Q96LI5"/>
<dbReference type="BioGRID-ORCS" id="246175">
    <property type="hits" value="25 hits in 1157 CRISPR screens"/>
</dbReference>
<dbReference type="CD-CODE" id="232F8A39">
    <property type="entry name" value="P-body"/>
</dbReference>
<dbReference type="CD-CODE" id="DEE660B4">
    <property type="entry name" value="Stress granule"/>
</dbReference>
<dbReference type="ChiTaRS" id="CNOT6L">
    <property type="organism name" value="human"/>
</dbReference>
<dbReference type="EvolutionaryTrace" id="Q96LI5"/>
<dbReference type="GenomeRNAi" id="246175"/>
<dbReference type="Pharos" id="Q96LI5">
    <property type="development level" value="Tbio"/>
</dbReference>
<dbReference type="PRO" id="PR:Q96LI5"/>
<dbReference type="Proteomes" id="UP000005640">
    <property type="component" value="Chromosome 4"/>
</dbReference>
<dbReference type="RNAct" id="Q96LI5">
    <property type="molecule type" value="protein"/>
</dbReference>
<dbReference type="Bgee" id="ENSG00000138767">
    <property type="expression patterns" value="Expressed in secondary oocyte and 195 other cell types or tissues"/>
</dbReference>
<dbReference type="ExpressionAtlas" id="Q96LI5">
    <property type="expression patterns" value="baseline and differential"/>
</dbReference>
<dbReference type="GO" id="GO:0030014">
    <property type="term" value="C:CCR4-NOT complex"/>
    <property type="evidence" value="ECO:0000314"/>
    <property type="project" value="UniProtKB"/>
</dbReference>
<dbReference type="GO" id="GO:0005737">
    <property type="term" value="C:cytoplasm"/>
    <property type="evidence" value="ECO:0000314"/>
    <property type="project" value="UniProtKB"/>
</dbReference>
<dbReference type="GO" id="GO:0005829">
    <property type="term" value="C:cytosol"/>
    <property type="evidence" value="ECO:0000314"/>
    <property type="project" value="HPA"/>
</dbReference>
<dbReference type="GO" id="GO:0005634">
    <property type="term" value="C:nucleus"/>
    <property type="evidence" value="ECO:0000314"/>
    <property type="project" value="UniProtKB"/>
</dbReference>
<dbReference type="GO" id="GO:0000175">
    <property type="term" value="F:3'-5'-RNA exonuclease activity"/>
    <property type="evidence" value="ECO:0000318"/>
    <property type="project" value="GO_Central"/>
</dbReference>
<dbReference type="GO" id="GO:0046872">
    <property type="term" value="F:metal ion binding"/>
    <property type="evidence" value="ECO:0007669"/>
    <property type="project" value="UniProtKB-KW"/>
</dbReference>
<dbReference type="GO" id="GO:0004535">
    <property type="term" value="F:poly(A)-specific ribonuclease activity"/>
    <property type="evidence" value="ECO:0000304"/>
    <property type="project" value="Reactome"/>
</dbReference>
<dbReference type="GO" id="GO:0006397">
    <property type="term" value="P:mRNA processing"/>
    <property type="evidence" value="ECO:0007669"/>
    <property type="project" value="UniProtKB-KW"/>
</dbReference>
<dbReference type="GO" id="GO:0000289">
    <property type="term" value="P:nuclear-transcribed mRNA poly(A) tail shortening"/>
    <property type="evidence" value="ECO:0000304"/>
    <property type="project" value="Reactome"/>
</dbReference>
<dbReference type="GO" id="GO:0008284">
    <property type="term" value="P:positive regulation of cell population proliferation"/>
    <property type="evidence" value="ECO:0000315"/>
    <property type="project" value="UniProtKB"/>
</dbReference>
<dbReference type="GO" id="GO:0010606">
    <property type="term" value="P:positive regulation of cytoplasmic mRNA processing body assembly"/>
    <property type="evidence" value="ECO:0000315"/>
    <property type="project" value="UniProtKB"/>
</dbReference>
<dbReference type="GO" id="GO:0006417">
    <property type="term" value="P:regulation of translation"/>
    <property type="evidence" value="ECO:0007669"/>
    <property type="project" value="UniProtKB-KW"/>
</dbReference>
<dbReference type="GO" id="GO:0031047">
    <property type="term" value="P:regulatory ncRNA-mediated gene silencing"/>
    <property type="evidence" value="ECO:0007669"/>
    <property type="project" value="UniProtKB-KW"/>
</dbReference>
<dbReference type="CDD" id="cd10312">
    <property type="entry name" value="Deadenylase_CCR4b"/>
    <property type="match status" value="1"/>
</dbReference>
<dbReference type="FunFam" id="3.60.10.10:FF:000002">
    <property type="entry name" value="CCR4-NOT transcription complex subunit 6 like"/>
    <property type="match status" value="1"/>
</dbReference>
<dbReference type="FunFam" id="3.80.10.10:FF:000008">
    <property type="entry name" value="CCR4-NOT transcription complex subunit 6 like"/>
    <property type="match status" value="1"/>
</dbReference>
<dbReference type="Gene3D" id="3.60.10.10">
    <property type="entry name" value="Endonuclease/exonuclease/phosphatase"/>
    <property type="match status" value="1"/>
</dbReference>
<dbReference type="Gene3D" id="3.80.10.10">
    <property type="entry name" value="Ribonuclease Inhibitor"/>
    <property type="match status" value="1"/>
</dbReference>
<dbReference type="InterPro" id="IPR050410">
    <property type="entry name" value="CCR4/nocturin_mRNA_transcr"/>
</dbReference>
<dbReference type="InterPro" id="IPR034967">
    <property type="entry name" value="Deadenylase_CCR4b"/>
</dbReference>
<dbReference type="InterPro" id="IPR036691">
    <property type="entry name" value="Endo/exonu/phosph_ase_sf"/>
</dbReference>
<dbReference type="InterPro" id="IPR005135">
    <property type="entry name" value="Endo/exonuclease/phosphatase"/>
</dbReference>
<dbReference type="InterPro" id="IPR001611">
    <property type="entry name" value="Leu-rich_rpt"/>
</dbReference>
<dbReference type="InterPro" id="IPR003591">
    <property type="entry name" value="Leu-rich_rpt_typical-subtyp"/>
</dbReference>
<dbReference type="InterPro" id="IPR032675">
    <property type="entry name" value="LRR_dom_sf"/>
</dbReference>
<dbReference type="PANTHER" id="PTHR12121">
    <property type="entry name" value="CARBON CATABOLITE REPRESSOR PROTEIN 4"/>
    <property type="match status" value="1"/>
</dbReference>
<dbReference type="PANTHER" id="PTHR12121:SF35">
    <property type="entry name" value="CCR4-NOT TRANSCRIPTION COMPLEX SUBUNIT 6-LIKE"/>
    <property type="match status" value="1"/>
</dbReference>
<dbReference type="Pfam" id="PF03372">
    <property type="entry name" value="Exo_endo_phos"/>
    <property type="match status" value="1"/>
</dbReference>
<dbReference type="Pfam" id="PF13855">
    <property type="entry name" value="LRR_8"/>
    <property type="match status" value="1"/>
</dbReference>
<dbReference type="SMART" id="SM00369">
    <property type="entry name" value="LRR_TYP"/>
    <property type="match status" value="3"/>
</dbReference>
<dbReference type="SUPFAM" id="SSF56219">
    <property type="entry name" value="DNase I-like"/>
    <property type="match status" value="1"/>
</dbReference>
<dbReference type="SUPFAM" id="SSF52058">
    <property type="entry name" value="L domain-like"/>
    <property type="match status" value="1"/>
</dbReference>
<dbReference type="PROSITE" id="PS51450">
    <property type="entry name" value="LRR"/>
    <property type="match status" value="4"/>
</dbReference>
<organism>
    <name type="scientific">Homo sapiens</name>
    <name type="common">Human</name>
    <dbReference type="NCBI Taxonomy" id="9606"/>
    <lineage>
        <taxon>Eukaryota</taxon>
        <taxon>Metazoa</taxon>
        <taxon>Chordata</taxon>
        <taxon>Craniata</taxon>
        <taxon>Vertebrata</taxon>
        <taxon>Euteleostomi</taxon>
        <taxon>Mammalia</taxon>
        <taxon>Eutheria</taxon>
        <taxon>Euarchontoglires</taxon>
        <taxon>Primates</taxon>
        <taxon>Haplorrhini</taxon>
        <taxon>Catarrhini</taxon>
        <taxon>Hominidae</taxon>
        <taxon>Homo</taxon>
    </lineage>
</organism>
<reference key="1">
    <citation type="journal article" date="2004" name="Nat. Genet.">
        <title>Complete sequencing and characterization of 21,243 full-length human cDNAs.</title>
        <authorList>
            <person name="Ota T."/>
            <person name="Suzuki Y."/>
            <person name="Nishikawa T."/>
            <person name="Otsuki T."/>
            <person name="Sugiyama T."/>
            <person name="Irie R."/>
            <person name="Wakamatsu A."/>
            <person name="Hayashi K."/>
            <person name="Sato H."/>
            <person name="Nagai K."/>
            <person name="Kimura K."/>
            <person name="Makita H."/>
            <person name="Sekine M."/>
            <person name="Obayashi M."/>
            <person name="Nishi T."/>
            <person name="Shibahara T."/>
            <person name="Tanaka T."/>
            <person name="Ishii S."/>
            <person name="Yamamoto J."/>
            <person name="Saito K."/>
            <person name="Kawai Y."/>
            <person name="Isono Y."/>
            <person name="Nakamura Y."/>
            <person name="Nagahari K."/>
            <person name="Murakami K."/>
            <person name="Yasuda T."/>
            <person name="Iwayanagi T."/>
            <person name="Wagatsuma M."/>
            <person name="Shiratori A."/>
            <person name="Sudo H."/>
            <person name="Hosoiri T."/>
            <person name="Kaku Y."/>
            <person name="Kodaira H."/>
            <person name="Kondo H."/>
            <person name="Sugawara M."/>
            <person name="Takahashi M."/>
            <person name="Kanda K."/>
            <person name="Yokoi T."/>
            <person name="Furuya T."/>
            <person name="Kikkawa E."/>
            <person name="Omura Y."/>
            <person name="Abe K."/>
            <person name="Kamihara K."/>
            <person name="Katsuta N."/>
            <person name="Sato K."/>
            <person name="Tanikawa M."/>
            <person name="Yamazaki M."/>
            <person name="Ninomiya K."/>
            <person name="Ishibashi T."/>
            <person name="Yamashita H."/>
            <person name="Murakawa K."/>
            <person name="Fujimori K."/>
            <person name="Tanai H."/>
            <person name="Kimata M."/>
            <person name="Watanabe M."/>
            <person name="Hiraoka S."/>
            <person name="Chiba Y."/>
            <person name="Ishida S."/>
            <person name="Ono Y."/>
            <person name="Takiguchi S."/>
            <person name="Watanabe S."/>
            <person name="Yosida M."/>
            <person name="Hotuta T."/>
            <person name="Kusano J."/>
            <person name="Kanehori K."/>
            <person name="Takahashi-Fujii A."/>
            <person name="Hara H."/>
            <person name="Tanase T.-O."/>
            <person name="Nomura Y."/>
            <person name="Togiya S."/>
            <person name="Komai F."/>
            <person name="Hara R."/>
            <person name="Takeuchi K."/>
            <person name="Arita M."/>
            <person name="Imose N."/>
            <person name="Musashino K."/>
            <person name="Yuuki H."/>
            <person name="Oshima A."/>
            <person name="Sasaki N."/>
            <person name="Aotsuka S."/>
            <person name="Yoshikawa Y."/>
            <person name="Matsunawa H."/>
            <person name="Ichihara T."/>
            <person name="Shiohata N."/>
            <person name="Sano S."/>
            <person name="Moriya S."/>
            <person name="Momiyama H."/>
            <person name="Satoh N."/>
            <person name="Takami S."/>
            <person name="Terashima Y."/>
            <person name="Suzuki O."/>
            <person name="Nakagawa S."/>
            <person name="Senoh A."/>
            <person name="Mizoguchi H."/>
            <person name="Goto Y."/>
            <person name="Shimizu F."/>
            <person name="Wakebe H."/>
            <person name="Hishigaki H."/>
            <person name="Watanabe T."/>
            <person name="Sugiyama A."/>
            <person name="Takemoto M."/>
            <person name="Kawakami B."/>
            <person name="Yamazaki M."/>
            <person name="Watanabe K."/>
            <person name="Kumagai A."/>
            <person name="Itakura S."/>
            <person name="Fukuzumi Y."/>
            <person name="Fujimori Y."/>
            <person name="Komiyama M."/>
            <person name="Tashiro H."/>
            <person name="Tanigami A."/>
            <person name="Fujiwara T."/>
            <person name="Ono T."/>
            <person name="Yamada K."/>
            <person name="Fujii Y."/>
            <person name="Ozaki K."/>
            <person name="Hirao M."/>
            <person name="Ohmori Y."/>
            <person name="Kawabata A."/>
            <person name="Hikiji T."/>
            <person name="Kobatake N."/>
            <person name="Inagaki H."/>
            <person name="Ikema Y."/>
            <person name="Okamoto S."/>
            <person name="Okitani R."/>
            <person name="Kawakami T."/>
            <person name="Noguchi S."/>
            <person name="Itoh T."/>
            <person name="Shigeta K."/>
            <person name="Senba T."/>
            <person name="Matsumura K."/>
            <person name="Nakajima Y."/>
            <person name="Mizuno T."/>
            <person name="Morinaga M."/>
            <person name="Sasaki M."/>
            <person name="Togashi T."/>
            <person name="Oyama M."/>
            <person name="Hata H."/>
            <person name="Watanabe M."/>
            <person name="Komatsu T."/>
            <person name="Mizushima-Sugano J."/>
            <person name="Satoh T."/>
            <person name="Shirai Y."/>
            <person name="Takahashi Y."/>
            <person name="Nakagawa K."/>
            <person name="Okumura K."/>
            <person name="Nagase T."/>
            <person name="Nomura N."/>
            <person name="Kikuchi H."/>
            <person name="Masuho Y."/>
            <person name="Yamashita R."/>
            <person name="Nakai K."/>
            <person name="Yada T."/>
            <person name="Nakamura Y."/>
            <person name="Ohara O."/>
            <person name="Isogai T."/>
            <person name="Sugano S."/>
        </authorList>
    </citation>
    <scope>NUCLEOTIDE SEQUENCE [LARGE SCALE MRNA] (ISOFORM 2)</scope>
    <source>
        <tissue>Testis</tissue>
    </source>
</reference>
<reference key="2">
    <citation type="journal article" date="2005" name="Nature">
        <title>Generation and annotation of the DNA sequences of human chromosomes 2 and 4.</title>
        <authorList>
            <person name="Hillier L.W."/>
            <person name="Graves T.A."/>
            <person name="Fulton R.S."/>
            <person name="Fulton L.A."/>
            <person name="Pepin K.H."/>
            <person name="Minx P."/>
            <person name="Wagner-McPherson C."/>
            <person name="Layman D."/>
            <person name="Wylie K."/>
            <person name="Sekhon M."/>
            <person name="Becker M.C."/>
            <person name="Fewell G.A."/>
            <person name="Delehaunty K.D."/>
            <person name="Miner T.L."/>
            <person name="Nash W.E."/>
            <person name="Kremitzki C."/>
            <person name="Oddy L."/>
            <person name="Du H."/>
            <person name="Sun H."/>
            <person name="Bradshaw-Cordum H."/>
            <person name="Ali J."/>
            <person name="Carter J."/>
            <person name="Cordes M."/>
            <person name="Harris A."/>
            <person name="Isak A."/>
            <person name="van Brunt A."/>
            <person name="Nguyen C."/>
            <person name="Du F."/>
            <person name="Courtney L."/>
            <person name="Kalicki J."/>
            <person name="Ozersky P."/>
            <person name="Abbott S."/>
            <person name="Armstrong J."/>
            <person name="Belter E.A."/>
            <person name="Caruso L."/>
            <person name="Cedroni M."/>
            <person name="Cotton M."/>
            <person name="Davidson T."/>
            <person name="Desai A."/>
            <person name="Elliott G."/>
            <person name="Erb T."/>
            <person name="Fronick C."/>
            <person name="Gaige T."/>
            <person name="Haakenson W."/>
            <person name="Haglund K."/>
            <person name="Holmes A."/>
            <person name="Harkins R."/>
            <person name="Kim K."/>
            <person name="Kruchowski S.S."/>
            <person name="Strong C.M."/>
            <person name="Grewal N."/>
            <person name="Goyea E."/>
            <person name="Hou S."/>
            <person name="Levy A."/>
            <person name="Martinka S."/>
            <person name="Mead K."/>
            <person name="McLellan M.D."/>
            <person name="Meyer R."/>
            <person name="Randall-Maher J."/>
            <person name="Tomlinson C."/>
            <person name="Dauphin-Kohlberg S."/>
            <person name="Kozlowicz-Reilly A."/>
            <person name="Shah N."/>
            <person name="Swearengen-Shahid S."/>
            <person name="Snider J."/>
            <person name="Strong J.T."/>
            <person name="Thompson J."/>
            <person name="Yoakum M."/>
            <person name="Leonard S."/>
            <person name="Pearman C."/>
            <person name="Trani L."/>
            <person name="Radionenko M."/>
            <person name="Waligorski J.E."/>
            <person name="Wang C."/>
            <person name="Rock S.M."/>
            <person name="Tin-Wollam A.-M."/>
            <person name="Maupin R."/>
            <person name="Latreille P."/>
            <person name="Wendl M.C."/>
            <person name="Yang S.-P."/>
            <person name="Pohl C."/>
            <person name="Wallis J.W."/>
            <person name="Spieth J."/>
            <person name="Bieri T.A."/>
            <person name="Berkowicz N."/>
            <person name="Nelson J.O."/>
            <person name="Osborne J."/>
            <person name="Ding L."/>
            <person name="Meyer R."/>
            <person name="Sabo A."/>
            <person name="Shotland Y."/>
            <person name="Sinha P."/>
            <person name="Wohldmann P.E."/>
            <person name="Cook L.L."/>
            <person name="Hickenbotham M.T."/>
            <person name="Eldred J."/>
            <person name="Williams D."/>
            <person name="Jones T.A."/>
            <person name="She X."/>
            <person name="Ciccarelli F.D."/>
            <person name="Izaurralde E."/>
            <person name="Taylor J."/>
            <person name="Schmutz J."/>
            <person name="Myers R.M."/>
            <person name="Cox D.R."/>
            <person name="Huang X."/>
            <person name="McPherson J.D."/>
            <person name="Mardis E.R."/>
            <person name="Clifton S.W."/>
            <person name="Warren W.C."/>
            <person name="Chinwalla A.T."/>
            <person name="Eddy S.R."/>
            <person name="Marra M.A."/>
            <person name="Ovcharenko I."/>
            <person name="Furey T.S."/>
            <person name="Miller W."/>
            <person name="Eichler E.E."/>
            <person name="Bork P."/>
            <person name="Suyama M."/>
            <person name="Torrents D."/>
            <person name="Waterston R.H."/>
            <person name="Wilson R.K."/>
        </authorList>
    </citation>
    <scope>NUCLEOTIDE SEQUENCE [LARGE SCALE GENOMIC DNA]</scope>
</reference>
<reference key="3">
    <citation type="journal article" date="2007" name="BMC Genomics">
        <title>The full-ORF clone resource of the German cDNA consortium.</title>
        <authorList>
            <person name="Bechtel S."/>
            <person name="Rosenfelder H."/>
            <person name="Duda A."/>
            <person name="Schmidt C.P."/>
            <person name="Ernst U."/>
            <person name="Wellenreuther R."/>
            <person name="Mehrle A."/>
            <person name="Schuster C."/>
            <person name="Bahr A."/>
            <person name="Bloecker H."/>
            <person name="Heubner D."/>
            <person name="Hoerlein A."/>
            <person name="Michel G."/>
            <person name="Wedler H."/>
            <person name="Koehrer K."/>
            <person name="Ottenwaelder B."/>
            <person name="Poustka A."/>
            <person name="Wiemann S."/>
            <person name="Schupp I."/>
        </authorList>
    </citation>
    <scope>NUCLEOTIDE SEQUENCE [LARGE SCALE MRNA] OF 208-555 (ISOFORM 1)</scope>
    <source>
        <tissue>Testis</tissue>
    </source>
</reference>
<reference key="4">
    <citation type="journal article" date="2007" name="Mol. Cell. Biol.">
        <title>Depletion of mammalian CCR4b deadenylase triggers elevation of the p27Kip1 mRNA level and impairs cell growth.</title>
        <authorList>
            <person name="Morita M."/>
            <person name="Suzuki T."/>
            <person name="Nakamura T."/>
            <person name="Yokoyama K."/>
            <person name="Miyasaka T."/>
            <person name="Yamamoto T."/>
        </authorList>
    </citation>
    <scope>IDENTIFICATION</scope>
    <scope>FUNCTION</scope>
    <scope>CATALYTIC ACTIVITY</scope>
    <scope>SUBCELLULAR LOCATION</scope>
    <scope>INTERACTION WITH CNOT1; CNOT3; CNOT7; CNOT8 AND CNOT9</scope>
    <scope>TISSUE SPECIFICITY</scope>
    <scope>MUTAGENESIS OF ASP-410; ASP-489 AND HIS-529</scope>
</reference>
<reference key="5">
    <citation type="journal article" date="2008" name="Cancer Sci.">
        <title>Interaction of antiproliferative protein Tob with the CCR4-NOT deadenylase complex.</title>
        <authorList>
            <person name="Miyasaka T."/>
            <person name="Morita M."/>
            <person name="Ito K."/>
            <person name="Suzuki T."/>
            <person name="Fukuda H."/>
            <person name="Takeda S."/>
            <person name="Inoue J."/>
            <person name="Semba K."/>
            <person name="Yamamoto T."/>
        </authorList>
    </citation>
    <scope>FUNCTION</scope>
    <scope>CATALYTIC ACTIVITY</scope>
    <scope>INTERACTION WITH TOB1</scope>
    <scope>SUBUNIT</scope>
</reference>
<reference key="6">
    <citation type="journal article" date="2009" name="Biochem. J.">
        <title>Human Ccr4-Not complexes contain variable deadenylase subunits.</title>
        <authorList>
            <person name="Lau N.C."/>
            <person name="Kolkman A."/>
            <person name="van Schaik F.M."/>
            <person name="Mulder K.W."/>
            <person name="Pijnappel W.W."/>
            <person name="Heck A.J."/>
            <person name="Timmers H.T."/>
        </authorList>
    </citation>
    <scope>IDENTIFICATION IN THE CCR4-NOT COMPLEX</scope>
    <scope>COMPOSITION OF THE CCR4-NOT COMPLEX</scope>
</reference>
<reference key="7">
    <citation type="journal article" date="2011" name="BMC Syst. Biol.">
        <title>Initial characterization of the human central proteome.</title>
        <authorList>
            <person name="Burkard T.R."/>
            <person name="Planyavsky M."/>
            <person name="Kaupe I."/>
            <person name="Breitwieser F.P."/>
            <person name="Buerckstuemmer T."/>
            <person name="Bennett K.L."/>
            <person name="Superti-Furga G."/>
            <person name="Colinge J."/>
        </authorList>
    </citation>
    <scope>IDENTIFICATION BY MASS SPECTROMETRY [LARGE SCALE ANALYSIS]</scope>
</reference>
<reference key="8">
    <citation type="journal article" date="2011" name="Mol. Biol. Cell">
        <title>The Ccr4a (CNOT6) and Ccr4b (CNOT6L) deadenylase subunits of the human Ccr4-Not complex contribute to the prevention of cell death and senescence.</title>
        <authorList>
            <person name="Mittal S."/>
            <person name="Aslam A."/>
            <person name="Doidge R."/>
            <person name="Medica R."/>
            <person name="Winkler G.S."/>
        </authorList>
    </citation>
    <scope>FUNCTION</scope>
    <scope>SUBCELLULAR LOCATION</scope>
</reference>
<reference evidence="14 15 16" key="9">
    <citation type="journal article" date="2010" name="EMBO J.">
        <title>Crystal structure of the human CNOT6L nuclease domain reveals strict poly(A) substrate specificity.</title>
        <authorList>
            <person name="Wang H."/>
            <person name="Morita M."/>
            <person name="Yang X."/>
            <person name="Suzuki T."/>
            <person name="Yang W."/>
            <person name="Wang J."/>
            <person name="Ito K."/>
            <person name="Wang Q."/>
            <person name="Zhao C."/>
            <person name="Bartlam M."/>
            <person name="Yamamoto T."/>
            <person name="Rao Z."/>
        </authorList>
    </citation>
    <scope>X-RAY CRYSTALLOGRAPHY (1.8 ANGSTROMS) OF 158-555 ALONE AND IN COMPLEX WITH MAGNESIUM IONS; AMP ANALOG AND POLY-A DNA</scope>
    <scope>MUTAGENESIS OF GLU-240; PRO-365; PHE-484; ASP-489 AND HIS-529</scope>
    <scope>COFACTOR</scope>
    <scope>ACTIVE SITE</scope>
    <scope>MAGNESIUM-BINDING SITES</scope>
</reference>
<reference evidence="17 18" key="10">
    <citation type="journal article" date="2016" name="FEBS Lett.">
        <title>Structural basis for inhibition of the deadenylase activity of human CNOT6L.</title>
        <authorList>
            <person name="Zhang Q."/>
            <person name="Yan D."/>
            <person name="Guo E."/>
            <person name="Ding B."/>
            <person name="Yang W."/>
            <person name="Liu R."/>
            <person name="Yamamoto T."/>
            <person name="Bartlam M."/>
        </authorList>
    </citation>
    <scope>X-RAY CRYSTALLOGRAPHY (1.80 ANGSTROMS) OF 158-555 IN COMPLEXES WITH CMP AND NEOMYCIN</scope>
    <scope>CATALYTIC ACTIVITY</scope>
    <scope>ACTIVITY REGULATION</scope>
    <scope>COFACTOR</scope>
    <scope>MUTAGENESIS OF GLU-240</scope>
    <scope>ACTIVE SITE</scope>
</reference>
<reference key="11">
    <citation type="journal article" date="2022" name="J. Med. Genet.">
        <title>Biallelic variants in ZFP36L2 cause female infertility characterised by recurrent preimplantation embryo arrest.</title>
        <authorList>
            <person name="Zheng W."/>
            <person name="Sha Q.Q."/>
            <person name="Hu H."/>
            <person name="Meng F."/>
            <person name="Zhou Q."/>
            <person name="Chen X."/>
            <person name="Zhang S."/>
            <person name="Gu Y."/>
            <person name="Yan X."/>
            <person name="Zhao L."/>
            <person name="Zong Y."/>
            <person name="Hu L."/>
            <person name="Gong F."/>
            <person name="Lu G."/>
            <person name="Fan H.Y."/>
            <person name="Lin G."/>
        </authorList>
    </citation>
    <scope>INTERACTION WITH ZFP36L2</scope>
</reference>
<protein>
    <recommendedName>
        <fullName>CCR4-NOT transcription complex subunit 6-like</fullName>
        <ecNumber evidence="2 3 7">3.1.13.4</ecNumber>
    </recommendedName>
    <alternativeName>
        <fullName>Carbon catabolite repressor protein 4 homolog B</fullName>
    </alternativeName>
</protein>
<name>CNO6L_HUMAN</name>
<gene>
    <name type="primary">CNOT6L</name>
    <name evidence="10" type="synonym">CCR4B</name>
</gene>
<sequence length="555" mass="63001">MRLIGMPKEKYDPPDPRRIYTIMSAEEVANGKKSHWAELEISGRVRSLSTSLWSLTHLTALHLNDNYLSRIPPDIAKLHNLVYLDLSSNKLRSLPAELGNMVSLRELLLNNNLLRVLPYELGRLFQLQTLGLKGNPLSQDILNLYQDPDGTRKLLNFMLDNLAVHPEQLPPRPWITLKERDQILPSASFTVMCYNVLCDKYATRQLYGYCPSWALNWEYRKKGIMEEIVNCDADIISLQEVETEQYFTLFLPALKERGYDGFFSPKSRAKIMSEQERKHVDGCAIFFKTEKFTLVQKHTVEFNQVAMANSDGSEAMLNRVMTKDNIGVAVVLEVHKELFGAGMKPIHAADKQLLIVANAHMHWDPEYSDVKLIQTMMFVSEVKNILEKASSRPGSPTADPNSIPLVLCADLNSLPDSGVVEYLSNGGVADNHKDFKELRYNECLMNFSCNGKNGSSEGRITHGFQLKSAYENNLMPYTNYTFDFKGVIDYIFYSKTHMNVLGVLGPLDPQWLVENNITGCPHPHIPSDHFSLLTQLELHPPLLPLVNGVHLPNRR</sequence>
<proteinExistence type="evidence at protein level"/>
<keyword id="KW-0002">3D-structure</keyword>
<keyword id="KW-0025">Alternative splicing</keyword>
<keyword id="KW-0963">Cytoplasm</keyword>
<keyword id="KW-0269">Exonuclease</keyword>
<keyword id="KW-0378">Hydrolase</keyword>
<keyword id="KW-0433">Leucine-rich repeat</keyword>
<keyword id="KW-0460">Magnesium</keyword>
<keyword id="KW-0479">Metal-binding</keyword>
<keyword id="KW-0507">mRNA processing</keyword>
<keyword id="KW-0540">Nuclease</keyword>
<keyword id="KW-0539">Nucleus</keyword>
<keyword id="KW-1267">Proteomics identification</keyword>
<keyword id="KW-1185">Reference proteome</keyword>
<keyword id="KW-0677">Repeat</keyword>
<keyword id="KW-0943">RNA-mediated gene silencing</keyword>
<keyword id="KW-0804">Transcription</keyword>
<keyword id="KW-0805">Transcription regulation</keyword>
<keyword id="KW-0810">Translation regulation</keyword>
<comment type="function">
    <text evidence="2 3 6">Has 3'-5' poly(A) exoribonuclease activity for synthetic poly(A) RNA substrate. Catalytic component of the CCR4-NOT complex which is one of the major cellular mRNA deadenylases and is linked to various cellular processes including bulk mRNA degradation, miRNA-mediated repression, translational repression during translational initiation and general transcription regulation. Additional complex functions may be a consequence of its influence on mRNA expression. May be involved in the deadenylation-dependent degradation of mRNAs through the 3'-UTR AU-rich element-mediated mechanism. Involved in deadenylation-dependent degradation of CDKN1B mRNA. Its mRNA deadenylase activity can be inhibited by TOB1. Mediates cell proliferation and cell survival and prevents cellular senescence.</text>
</comment>
<comment type="catalytic activity">
    <reaction evidence="2 3 7">
        <text>Exonucleolytic cleavage of poly(A) to 5'-AMP.</text>
        <dbReference type="EC" id="3.1.13.4"/>
    </reaction>
</comment>
<comment type="cofactor">
    <cofactor evidence="5 7">
        <name>Mg(2+)</name>
        <dbReference type="ChEBI" id="CHEBI:18420"/>
    </cofactor>
    <text evidence="5 7">Binds 2 magnesium ions, but the ions interact each with only 1 or 2 residues.</text>
</comment>
<comment type="activity regulation">
    <text evidence="7">Inhibited by free AMP, and with lesser efficiency also by CMP, GMP, UMP, ATP and neomycin.</text>
</comment>
<comment type="subunit">
    <text evidence="1 2 3 4 8">Component of the CCR4-NOT complex; distinct complexes seem to exist that differ in the participation of probably mutually exclusive catalytic subunits; the complex contains two deadenylase subunits, CNOT6 or CNOT6L, and CNOT7 or CNOT8 (PubMed:17452450, PubMed:18377426, PubMed:19558367). Interacts with CNOT1, CNOT3, CNOT7, CNOT8 and CNOT9 (PubMed:17452450). Interacts with TOB1 (PubMed:18377426). Interacts with NANOS2 (By similarity). Interacts with ZFP36 (By similarity). Interacts with ZFP36L2 (PubMed:34611029). Interacts with RBM46 (By similarity).</text>
</comment>
<comment type="interaction">
    <interactant intactId="EBI-1046635">
        <id>Q96LI5</id>
    </interactant>
    <interactant intactId="EBI-1222758">
        <id>A5YKK6</id>
        <label>CNOT1</label>
    </interactant>
    <organismsDiffer>false</organismsDiffer>
    <experiments>6</experiments>
</comment>
<comment type="interaction">
    <interactant intactId="EBI-1046635">
        <id>Q96LI5</id>
    </interactant>
    <interactant intactId="EBI-1054261">
        <id>Q9H9A5</id>
        <label>CNOT10</label>
    </interactant>
    <organismsDiffer>false</organismsDiffer>
    <experiments>3</experiments>
</comment>
<comment type="interaction">
    <interactant intactId="EBI-1046635">
        <id>Q96LI5</id>
    </interactant>
    <interactant intactId="EBI-743033">
        <id>Q9NZN8</id>
        <label>CNOT2</label>
    </interactant>
    <organismsDiffer>false</organismsDiffer>
    <experiments>4</experiments>
</comment>
<comment type="interaction">
    <interactant intactId="EBI-1046635">
        <id>Q96LI5</id>
    </interactant>
    <interactant intactId="EBI-743073">
        <id>O75175</id>
        <label>CNOT3</label>
    </interactant>
    <organismsDiffer>false</organismsDiffer>
    <experiments>4</experiments>
</comment>
<comment type="interaction">
    <interactant intactId="EBI-1046635">
        <id>Q96LI5</id>
    </interactant>
    <interactant intactId="EBI-2105113">
        <id>Q9UIV1</id>
        <label>CNOT7</label>
    </interactant>
    <organismsDiffer>false</organismsDiffer>
    <experiments>9</experiments>
</comment>
<comment type="interaction">
    <interactant intactId="EBI-1046635">
        <id>Q96LI5</id>
    </interactant>
    <interactant intactId="EBI-742299">
        <id>Q9UFF9</id>
        <label>CNOT8</label>
    </interactant>
    <organismsDiffer>false</organismsDiffer>
    <experiments>6</experiments>
</comment>
<comment type="interaction">
    <interactant intactId="EBI-1046635">
        <id>Q96LI5</id>
    </interactant>
    <interactant intactId="EBI-357079">
        <id>Q92600</id>
        <label>CNOT9</label>
    </interactant>
    <organismsDiffer>false</organismsDiffer>
    <experiments>3</experiments>
</comment>
<comment type="interaction">
    <interactant intactId="EBI-1046635">
        <id>Q96LI5</id>
    </interactant>
    <interactant intactId="EBI-2104458">
        <id>Q9C0C2</id>
        <label>TNKS1BP1</label>
    </interactant>
    <organismsDiffer>false</organismsDiffer>
    <experiments>3</experiments>
</comment>
<comment type="interaction">
    <interactant intactId="EBI-1046635">
        <id>Q96LI5</id>
    </interactant>
    <interactant intactId="EBI-6507625">
        <id>Q9HCJ0</id>
        <label>TNRC6C</label>
    </interactant>
    <organismsDiffer>false</organismsDiffer>
    <experiments>2</experiments>
</comment>
<comment type="interaction">
    <interactant intactId="EBI-1046635">
        <id>Q96LI5</id>
    </interactant>
    <interactant intactId="EBI-723281">
        <id>P50616</id>
        <label>TOB1</label>
    </interactant>
    <organismsDiffer>false</organismsDiffer>
    <experiments>6</experiments>
</comment>
<comment type="subcellular location">
    <subcellularLocation>
        <location evidence="2 6">Cytoplasm</location>
    </subcellularLocation>
    <subcellularLocation>
        <location evidence="6">Nucleus</location>
    </subcellularLocation>
    <text evidence="6">Predominantly cytoplasmic.</text>
</comment>
<comment type="alternative products">
    <event type="alternative splicing"/>
    <isoform>
        <id>Q96LI5-1</id>
        <name>1</name>
        <sequence type="displayed"/>
    </isoform>
    <isoform>
        <id>Q96LI5-2</id>
        <name>2</name>
        <sequence type="described" ref="VSP_030321 VSP_030322 VSP_030323"/>
    </isoform>
</comment>
<comment type="tissue specificity">
    <text evidence="2">Highly expressed in placenta, skeletal muscle, pancreas, testis and leukocytes. Weakly expressed in heart, spleen and thymus.</text>
</comment>
<comment type="miscellaneous">
    <text>Depletion of CNOT6L causes cell growth defect.</text>
</comment>
<comment type="similarity">
    <text evidence="11">Belongs to the CCR4/nocturin family.</text>
</comment>
<evidence type="ECO:0000250" key="1">
    <source>
        <dbReference type="UniProtKB" id="Q8VEG6"/>
    </source>
</evidence>
<evidence type="ECO:0000269" key="2">
    <source>
    </source>
</evidence>
<evidence type="ECO:0000269" key="3">
    <source>
    </source>
</evidence>
<evidence type="ECO:0000269" key="4">
    <source>
    </source>
</evidence>
<evidence type="ECO:0000269" key="5">
    <source>
    </source>
</evidence>
<evidence type="ECO:0000269" key="6">
    <source>
    </source>
</evidence>
<evidence type="ECO:0000269" key="7">
    <source>
    </source>
</evidence>
<evidence type="ECO:0000269" key="8">
    <source>
    </source>
</evidence>
<evidence type="ECO:0000303" key="9">
    <source>
    </source>
</evidence>
<evidence type="ECO:0000303" key="10">
    <source>
    </source>
</evidence>
<evidence type="ECO:0000305" key="11"/>
<evidence type="ECO:0000305" key="12">
    <source>
    </source>
</evidence>
<evidence type="ECO:0000305" key="13">
    <source>
    </source>
</evidence>
<evidence type="ECO:0007744" key="14">
    <source>
        <dbReference type="PDB" id="3NGN"/>
    </source>
</evidence>
<evidence type="ECO:0007744" key="15">
    <source>
        <dbReference type="PDB" id="3NGO"/>
    </source>
</evidence>
<evidence type="ECO:0007744" key="16">
    <source>
        <dbReference type="PDB" id="3NGQ"/>
    </source>
</evidence>
<evidence type="ECO:0007744" key="17">
    <source>
        <dbReference type="PDB" id="5DV2"/>
    </source>
</evidence>
<evidence type="ECO:0007744" key="18">
    <source>
        <dbReference type="PDB" id="5DV4"/>
    </source>
</evidence>
<evidence type="ECO:0007829" key="19">
    <source>
        <dbReference type="PDB" id="3NGN"/>
    </source>
</evidence>
<evidence type="ECO:0007829" key="20">
    <source>
        <dbReference type="PDB" id="3NGO"/>
    </source>
</evidence>
<evidence type="ECO:0007829" key="21">
    <source>
        <dbReference type="PDB" id="3NGQ"/>
    </source>
</evidence>
<feature type="chain" id="PRO_0000314587" description="CCR4-NOT transcription complex subunit 6-like">
    <location>
        <begin position="1"/>
        <end position="555"/>
    </location>
</feature>
<feature type="repeat" description="LRR 1">
    <location>
        <begin position="57"/>
        <end position="78"/>
    </location>
</feature>
<feature type="repeat" description="LRR 2">
    <location>
        <begin position="80"/>
        <end position="101"/>
    </location>
</feature>
<feature type="repeat" description="LRR 3">
    <location>
        <begin position="103"/>
        <end position="125"/>
    </location>
</feature>
<feature type="repeat" description="LRR 4">
    <location>
        <begin position="126"/>
        <end position="148"/>
    </location>
</feature>
<feature type="region of interest" description="Required for interaction with CNOT1, CNOT3 and CNOT7" evidence="2">
    <location>
        <begin position="1"/>
        <end position="152"/>
    </location>
</feature>
<feature type="region of interest" description="Nuclease domain">
    <location>
        <begin position="158"/>
        <end position="555"/>
    </location>
</feature>
<feature type="active site" description="Proton donor/acceptor" evidence="12 13">
    <location>
        <position position="410"/>
    </location>
</feature>
<feature type="binding site" evidence="5 15">
    <location>
        <position position="240"/>
    </location>
    <ligand>
        <name>Mg(2+)</name>
        <dbReference type="ChEBI" id="CHEBI:18420"/>
        <label>1</label>
    </ligand>
</feature>
<feature type="binding site" evidence="5 7 14 17">
    <location>
        <position position="240"/>
    </location>
    <ligand>
        <name>substrate</name>
    </ligand>
</feature>
<feature type="binding site" evidence="5 14">
    <location>
        <position position="276"/>
    </location>
    <ligand>
        <name>substrate</name>
    </ligand>
</feature>
<feature type="binding site" evidence="5 7 14 17">
    <location>
        <position position="360"/>
    </location>
    <ligand>
        <name>substrate</name>
    </ligand>
</feature>
<feature type="binding site" evidence="5">
    <location>
        <position position="365"/>
    </location>
    <ligand>
        <name>substrate</name>
    </ligand>
</feature>
<feature type="binding site" evidence="5 16">
    <location>
        <position position="410"/>
    </location>
    <ligand>
        <name>Mg(2+)</name>
        <dbReference type="ChEBI" id="CHEBI:18420"/>
        <label>2</label>
    </ligand>
</feature>
<feature type="binding site" evidence="5 7 14 17">
    <location>
        <position position="412"/>
    </location>
    <ligand>
        <name>substrate</name>
    </ligand>
</feature>
<feature type="binding site" evidence="5 7 14 17">
    <location>
        <position position="479"/>
    </location>
    <ligand>
        <name>substrate</name>
    </ligand>
</feature>
<feature type="binding site" evidence="5 7 17">
    <location>
        <position position="484"/>
    </location>
    <ligand>
        <name>substrate</name>
    </ligand>
</feature>
<feature type="splice variant" id="VSP_030321" description="In isoform 2." evidence="9">
    <location>
        <begin position="127"/>
        <end position="153"/>
    </location>
</feature>
<feature type="splice variant" id="VSP_030322" description="In isoform 2." evidence="9">
    <original>GVIDYIFYSKTHMNVLG</original>
    <variation>VSGSLWAGVEIISDTSM</variation>
    <location>
        <begin position="486"/>
        <end position="502"/>
    </location>
</feature>
<feature type="splice variant" id="VSP_030323" description="In isoform 2." evidence="9">
    <location>
        <begin position="503"/>
        <end position="555"/>
    </location>
</feature>
<feature type="mutagenesis site" description="Loss of deadenylase activity." evidence="5 7">
    <original>E</original>
    <variation>A</variation>
    <location>
        <position position="240"/>
    </location>
</feature>
<feature type="mutagenesis site" description="Decreased deadenylase activity." evidence="5">
    <original>P</original>
    <variation>A</variation>
    <location>
        <position position="365"/>
    </location>
</feature>
<feature type="mutagenesis site" description="Loss of deadenylase activity." evidence="2">
    <original>D</original>
    <variation>A</variation>
    <location>
        <position position="410"/>
    </location>
</feature>
<feature type="mutagenesis site" description="Loss of deadenylase activity." evidence="5">
    <original>F</original>
    <variation>A</variation>
    <location>
        <position position="484"/>
    </location>
</feature>
<feature type="mutagenesis site" description="Loss of deadenylase activity." evidence="2 5">
    <original>D</original>
    <variation>A</variation>
    <location>
        <position position="489"/>
    </location>
</feature>
<feature type="mutagenesis site" description="Loss of deadenylase activity." evidence="2 5">
    <original>H</original>
    <variation>A</variation>
    <location>
        <position position="529"/>
    </location>
</feature>
<feature type="sequence conflict" description="In Ref. 1; BAB71707." evidence="11" ref="1">
    <original>R</original>
    <variation>G</variation>
    <location>
        <position position="439"/>
    </location>
</feature>
<feature type="strand" evidence="21">
    <location>
        <begin position="174"/>
        <end position="176"/>
    </location>
</feature>
<feature type="strand" evidence="21">
    <location>
        <begin position="187"/>
        <end position="195"/>
    </location>
</feature>
<feature type="helix" evidence="21">
    <location>
        <begin position="199"/>
        <end position="201"/>
    </location>
</feature>
<feature type="turn" evidence="21">
    <location>
        <begin position="204"/>
        <end position="206"/>
    </location>
</feature>
<feature type="helix" evidence="21">
    <location>
        <begin position="212"/>
        <end position="215"/>
    </location>
</feature>
<feature type="helix" evidence="21">
    <location>
        <begin position="217"/>
        <end position="231"/>
    </location>
</feature>
<feature type="strand" evidence="21">
    <location>
        <begin position="234"/>
        <end position="242"/>
    </location>
</feature>
<feature type="helix" evidence="21">
    <location>
        <begin position="243"/>
        <end position="248"/>
    </location>
</feature>
<feature type="helix" evidence="21">
    <location>
        <begin position="250"/>
        <end position="256"/>
    </location>
</feature>
<feature type="strand" evidence="21">
    <location>
        <begin position="259"/>
        <end position="266"/>
    </location>
</feature>
<feature type="strand" evidence="19">
    <location>
        <begin position="268"/>
        <end position="270"/>
    </location>
</feature>
<feature type="helix" evidence="21">
    <location>
        <begin position="274"/>
        <end position="278"/>
    </location>
</feature>
<feature type="strand" evidence="21">
    <location>
        <begin position="281"/>
        <end position="288"/>
    </location>
</feature>
<feature type="turn" evidence="21">
    <location>
        <begin position="289"/>
        <end position="291"/>
    </location>
</feature>
<feature type="strand" evidence="21">
    <location>
        <begin position="292"/>
        <end position="301"/>
    </location>
</feature>
<feature type="helix" evidence="21">
    <location>
        <begin position="302"/>
        <end position="308"/>
    </location>
</feature>
<feature type="helix" evidence="21">
    <location>
        <begin position="314"/>
        <end position="318"/>
    </location>
</feature>
<feature type="turn" evidence="21">
    <location>
        <begin position="319"/>
        <end position="322"/>
    </location>
</feature>
<feature type="strand" evidence="21">
    <location>
        <begin position="326"/>
        <end position="334"/>
    </location>
</feature>
<feature type="helix" evidence="21">
    <location>
        <begin position="336"/>
        <end position="338"/>
    </location>
</feature>
<feature type="strand" evidence="21">
    <location>
        <begin position="353"/>
        <end position="360"/>
    </location>
</feature>
<feature type="helix" evidence="20">
    <location>
        <begin position="365"/>
        <end position="367"/>
    </location>
</feature>
<feature type="helix" evidence="21">
    <location>
        <begin position="368"/>
        <end position="386"/>
    </location>
</feature>
<feature type="strand" evidence="21">
    <location>
        <begin position="405"/>
        <end position="410"/>
    </location>
</feature>
<feature type="helix" evidence="21">
    <location>
        <begin position="418"/>
        <end position="425"/>
    </location>
</feature>
<feature type="strand" evidence="21">
    <location>
        <begin position="427"/>
        <end position="429"/>
    </location>
</feature>
<feature type="helix" evidence="21">
    <location>
        <begin position="433"/>
        <end position="435"/>
    </location>
</feature>
<feature type="helix" evidence="21">
    <location>
        <begin position="443"/>
        <end position="447"/>
    </location>
</feature>
<feature type="strand" evidence="21">
    <location>
        <begin position="459"/>
        <end position="461"/>
    </location>
</feature>
<feature type="strand" evidence="21">
    <location>
        <begin position="466"/>
        <end position="468"/>
    </location>
</feature>
<feature type="turn" evidence="21">
    <location>
        <begin position="469"/>
        <end position="473"/>
    </location>
</feature>
<feature type="strand" evidence="21">
    <location>
        <begin position="474"/>
        <end position="476"/>
    </location>
</feature>
<feature type="strand" evidence="21">
    <location>
        <begin position="478"/>
        <end position="480"/>
    </location>
</feature>
<feature type="strand" evidence="21">
    <location>
        <begin position="489"/>
        <end position="494"/>
    </location>
</feature>
<feature type="turn" evidence="21">
    <location>
        <begin position="495"/>
        <end position="497"/>
    </location>
</feature>
<feature type="strand" evidence="21">
    <location>
        <begin position="498"/>
        <end position="504"/>
    </location>
</feature>
<feature type="helix" evidence="21">
    <location>
        <begin position="509"/>
        <end position="514"/>
    </location>
</feature>
<feature type="strand" evidence="19">
    <location>
        <begin position="519"/>
        <end position="522"/>
    </location>
</feature>
<feature type="strand" evidence="21">
    <location>
        <begin position="527"/>
        <end position="529"/>
    </location>
</feature>
<feature type="strand" evidence="21">
    <location>
        <begin position="532"/>
        <end position="538"/>
    </location>
</feature>
<accession>Q96LI5</accession>
<accession>Q9UF92</accession>